<gene>
    <name evidence="1" type="primary">nusG</name>
    <name type="ordered locus">MPN_067</name>
    <name type="ORF">D09_orf320</name>
    <name type="ORF">MP087</name>
</gene>
<accession>P75049</accession>
<feature type="chain" id="PRO_0000113975" description="Transcription termination/antitermination protein NusG">
    <location>
        <begin position="1"/>
        <end position="320"/>
    </location>
</feature>
<reference key="1">
    <citation type="journal article" date="1996" name="Nucleic Acids Res.">
        <title>Complete sequence analysis of the genome of the bacterium Mycoplasma pneumoniae.</title>
        <authorList>
            <person name="Himmelreich R."/>
            <person name="Hilbert H."/>
            <person name="Plagens H."/>
            <person name="Pirkl E."/>
            <person name="Li B.-C."/>
            <person name="Herrmann R."/>
        </authorList>
    </citation>
    <scope>NUCLEOTIDE SEQUENCE [LARGE SCALE GENOMIC DNA]</scope>
    <source>
        <strain>ATCC 29342 / M129 / Subtype 1</strain>
    </source>
</reference>
<reference key="2">
    <citation type="journal article" date="2000" name="Electrophoresis">
        <title>Towards a two-dimensional proteome map of Mycoplasma pneumoniae.</title>
        <authorList>
            <person name="Regula J.T."/>
            <person name="Ueberle B."/>
            <person name="Boguth G."/>
            <person name="Goerg A."/>
            <person name="Schnoelzer M."/>
            <person name="Herrmann R."/>
            <person name="Frank R."/>
        </authorList>
    </citation>
    <scope>PARTIAL PROTEIN SEQUENCE</scope>
    <scope>IDENTIFICATION BY MASS SPECTROMETRY</scope>
    <source>
        <strain>ATCC 29342 / M129 / Subtype 1</strain>
    </source>
</reference>
<sequence>MEQVELIPQWYVAPVSVKDEAVVRNLKAKVKALGFDNEILDVRVLKEREVIEEVFSLKSGKLPRSLKNTAFTKWFVLDEDRYLKVKISEKNLLGRYIYIKMIYSEDAWRIIRNFPGITGIVGSSGRGALPTPLDQADADNLEQMLKGISVNPKKRVLVTNTAIVEMDADKFDEKCQYILKHKQVKPEAIAQVNESGEIIDTNQFAQALMEANKAEQDEWNEDVAIVKSEANKVDPSVLIPYLGKYEIVEGDTKVDQLQQFSVGNLVEVHLTGAIHIQGQIKALYQGTINKAVVEVELTTKTQLINLPLENLSFIEVEQSH</sequence>
<keyword id="KW-0903">Direct protein sequencing</keyword>
<keyword id="KW-1185">Reference proteome</keyword>
<keyword id="KW-0804">Transcription</keyword>
<keyword id="KW-0889">Transcription antitermination</keyword>
<keyword id="KW-0805">Transcription regulation</keyword>
<keyword id="KW-0806">Transcription termination</keyword>
<proteinExistence type="evidence at protein level"/>
<comment type="function">
    <text evidence="1">Participates in transcription elongation, termination and antitermination.</text>
</comment>
<comment type="similarity">
    <text evidence="1">Belongs to the NusG family.</text>
</comment>
<dbReference type="EMBL" id="U00089">
    <property type="protein sequence ID" value="AAB95735.1"/>
    <property type="molecule type" value="Genomic_DNA"/>
</dbReference>
<dbReference type="PIR" id="S73413">
    <property type="entry name" value="S73413"/>
</dbReference>
<dbReference type="RefSeq" id="NP_109755.1">
    <property type="nucleotide sequence ID" value="NC_000912.1"/>
</dbReference>
<dbReference type="RefSeq" id="WP_010874424.1">
    <property type="nucleotide sequence ID" value="NZ_OU342337.1"/>
</dbReference>
<dbReference type="IntAct" id="P75049">
    <property type="interactions" value="2"/>
</dbReference>
<dbReference type="STRING" id="272634.MPN_067"/>
<dbReference type="EnsemblBacteria" id="AAB95735">
    <property type="protein sequence ID" value="AAB95735"/>
    <property type="gene ID" value="MPN_067"/>
</dbReference>
<dbReference type="KEGG" id="mpn:MPN_067"/>
<dbReference type="PATRIC" id="fig|272634.6.peg.68"/>
<dbReference type="HOGENOM" id="CLU_879462_0_0_14"/>
<dbReference type="OrthoDB" id="9809075at2"/>
<dbReference type="BioCyc" id="MPNE272634:G1GJ3-105-MONOMER"/>
<dbReference type="Proteomes" id="UP000000808">
    <property type="component" value="Chromosome"/>
</dbReference>
<dbReference type="GO" id="GO:0005829">
    <property type="term" value="C:cytosol"/>
    <property type="evidence" value="ECO:0007669"/>
    <property type="project" value="TreeGrafter"/>
</dbReference>
<dbReference type="GO" id="GO:0006353">
    <property type="term" value="P:DNA-templated transcription termination"/>
    <property type="evidence" value="ECO:0007669"/>
    <property type="project" value="UniProtKB-UniRule"/>
</dbReference>
<dbReference type="GO" id="GO:0032784">
    <property type="term" value="P:regulation of DNA-templated transcription elongation"/>
    <property type="evidence" value="ECO:0007669"/>
    <property type="project" value="InterPro"/>
</dbReference>
<dbReference type="GO" id="GO:0031564">
    <property type="term" value="P:transcription antitermination"/>
    <property type="evidence" value="ECO:0007669"/>
    <property type="project" value="UniProtKB-UniRule"/>
</dbReference>
<dbReference type="GO" id="GO:0140673">
    <property type="term" value="P:transcription elongation-coupled chromatin remodeling"/>
    <property type="evidence" value="ECO:0007669"/>
    <property type="project" value="InterPro"/>
</dbReference>
<dbReference type="CDD" id="cd09891">
    <property type="entry name" value="NGN_Bact_1"/>
    <property type="match status" value="1"/>
</dbReference>
<dbReference type="Gene3D" id="3.30.70.940">
    <property type="entry name" value="NusG, N-terminal domain"/>
    <property type="match status" value="1"/>
</dbReference>
<dbReference type="HAMAP" id="MF_00948">
    <property type="entry name" value="NusG"/>
    <property type="match status" value="1"/>
</dbReference>
<dbReference type="InterPro" id="IPR047050">
    <property type="entry name" value="NGN"/>
</dbReference>
<dbReference type="InterPro" id="IPR006645">
    <property type="entry name" value="NGN-like_dom"/>
</dbReference>
<dbReference type="InterPro" id="IPR036735">
    <property type="entry name" value="NGN_dom_sf"/>
</dbReference>
<dbReference type="InterPro" id="IPR043425">
    <property type="entry name" value="NusG-like"/>
</dbReference>
<dbReference type="InterPro" id="IPR001062">
    <property type="entry name" value="Transcrpt_antiterm_NusG"/>
</dbReference>
<dbReference type="InterPro" id="IPR010216">
    <property type="entry name" value="Transcrpt_antiterm_NusG_myco"/>
</dbReference>
<dbReference type="NCBIfam" id="TIGR01956">
    <property type="entry name" value="NusG_myco"/>
    <property type="match status" value="1"/>
</dbReference>
<dbReference type="PANTHER" id="PTHR30265">
    <property type="entry name" value="RHO-INTERACTING TRANSCRIPTION TERMINATION FACTOR NUSG"/>
    <property type="match status" value="1"/>
</dbReference>
<dbReference type="PANTHER" id="PTHR30265:SF2">
    <property type="entry name" value="TRANSCRIPTION TERMINATION_ANTITERMINATION PROTEIN NUSG"/>
    <property type="match status" value="1"/>
</dbReference>
<dbReference type="Pfam" id="PF02357">
    <property type="entry name" value="NusG"/>
    <property type="match status" value="1"/>
</dbReference>
<dbReference type="SMART" id="SM00738">
    <property type="entry name" value="NGN"/>
    <property type="match status" value="1"/>
</dbReference>
<dbReference type="SUPFAM" id="SSF82679">
    <property type="entry name" value="N-utilization substance G protein NusG, N-terminal domain"/>
    <property type="match status" value="1"/>
</dbReference>
<organism>
    <name type="scientific">Mycoplasma pneumoniae (strain ATCC 29342 / M129 / Subtype 1)</name>
    <name type="common">Mycoplasmoides pneumoniae</name>
    <dbReference type="NCBI Taxonomy" id="272634"/>
    <lineage>
        <taxon>Bacteria</taxon>
        <taxon>Bacillati</taxon>
        <taxon>Mycoplasmatota</taxon>
        <taxon>Mycoplasmoidales</taxon>
        <taxon>Mycoplasmoidaceae</taxon>
        <taxon>Mycoplasmoides</taxon>
    </lineage>
</organism>
<name>NUSG_MYCPN</name>
<protein>
    <recommendedName>
        <fullName evidence="1">Transcription termination/antitermination protein NusG</fullName>
    </recommendedName>
</protein>
<evidence type="ECO:0000255" key="1">
    <source>
        <dbReference type="HAMAP-Rule" id="MF_00948"/>
    </source>
</evidence>